<protein>
    <recommendedName>
        <fullName evidence="1">Thymidine phosphorylase</fullName>
        <ecNumber evidence="1">2.4.2.4</ecNumber>
    </recommendedName>
    <alternativeName>
        <fullName evidence="1">TdRPase</fullName>
    </alternativeName>
</protein>
<feature type="chain" id="PRO_0000059061" description="Thymidine phosphorylase">
    <location>
        <begin position="1"/>
        <end position="440"/>
    </location>
</feature>
<dbReference type="EC" id="2.4.2.4" evidence="1"/>
<dbReference type="EMBL" id="AE017220">
    <property type="protein sequence ID" value="AAX68322.1"/>
    <property type="status" value="ALT_INIT"/>
    <property type="molecule type" value="Genomic_DNA"/>
</dbReference>
<dbReference type="RefSeq" id="WP_000477844.1">
    <property type="nucleotide sequence ID" value="NC_006905.1"/>
</dbReference>
<dbReference type="SMR" id="Q57G40"/>
<dbReference type="KEGG" id="sec:SCH_4416"/>
<dbReference type="HOGENOM" id="CLU_025040_0_1_6"/>
<dbReference type="UniPathway" id="UPA00578">
    <property type="reaction ID" value="UER00638"/>
</dbReference>
<dbReference type="Proteomes" id="UP000000538">
    <property type="component" value="Chromosome"/>
</dbReference>
<dbReference type="GO" id="GO:0005829">
    <property type="term" value="C:cytosol"/>
    <property type="evidence" value="ECO:0007669"/>
    <property type="project" value="TreeGrafter"/>
</dbReference>
<dbReference type="GO" id="GO:0004645">
    <property type="term" value="F:1,4-alpha-oligoglucan phosphorylase activity"/>
    <property type="evidence" value="ECO:0007669"/>
    <property type="project" value="InterPro"/>
</dbReference>
<dbReference type="GO" id="GO:0009032">
    <property type="term" value="F:thymidine phosphorylase activity"/>
    <property type="evidence" value="ECO:0007669"/>
    <property type="project" value="UniProtKB-UniRule"/>
</dbReference>
<dbReference type="GO" id="GO:0006206">
    <property type="term" value="P:pyrimidine nucleobase metabolic process"/>
    <property type="evidence" value="ECO:0007669"/>
    <property type="project" value="InterPro"/>
</dbReference>
<dbReference type="GO" id="GO:0046104">
    <property type="term" value="P:thymidine metabolic process"/>
    <property type="evidence" value="ECO:0007669"/>
    <property type="project" value="UniProtKB-UniRule"/>
</dbReference>
<dbReference type="FunFam" id="3.40.1030.10:FF:000001">
    <property type="entry name" value="Thymidine phosphorylase"/>
    <property type="match status" value="1"/>
</dbReference>
<dbReference type="FunFam" id="3.90.1170.30:FF:000001">
    <property type="entry name" value="Thymidine phosphorylase"/>
    <property type="match status" value="1"/>
</dbReference>
<dbReference type="Gene3D" id="3.40.1030.10">
    <property type="entry name" value="Nucleoside phosphorylase/phosphoribosyltransferase catalytic domain"/>
    <property type="match status" value="1"/>
</dbReference>
<dbReference type="Gene3D" id="3.90.1170.30">
    <property type="entry name" value="Pyrimidine nucleoside phosphorylase-like, C-terminal domain"/>
    <property type="match status" value="1"/>
</dbReference>
<dbReference type="Gene3D" id="1.20.970.10">
    <property type="entry name" value="Transferase, Pyrimidine Nucleoside Phosphorylase, Chain C"/>
    <property type="match status" value="1"/>
</dbReference>
<dbReference type="HAMAP" id="MF_01628">
    <property type="entry name" value="Thymid_phosp"/>
    <property type="match status" value="1"/>
</dbReference>
<dbReference type="InterPro" id="IPR000312">
    <property type="entry name" value="Glycosyl_Trfase_fam3"/>
</dbReference>
<dbReference type="InterPro" id="IPR017459">
    <property type="entry name" value="Glycosyl_Trfase_fam3_N_dom"/>
</dbReference>
<dbReference type="InterPro" id="IPR036320">
    <property type="entry name" value="Glycosyl_Trfase_fam3_N_dom_sf"/>
</dbReference>
<dbReference type="InterPro" id="IPR035902">
    <property type="entry name" value="Nuc_phospho_transferase"/>
</dbReference>
<dbReference type="InterPro" id="IPR036566">
    <property type="entry name" value="PYNP-like_C_sf"/>
</dbReference>
<dbReference type="InterPro" id="IPR013102">
    <property type="entry name" value="PYNP_C"/>
</dbReference>
<dbReference type="InterPro" id="IPR018090">
    <property type="entry name" value="Pyrmidine_PPas_bac/euk"/>
</dbReference>
<dbReference type="InterPro" id="IPR017872">
    <property type="entry name" value="Pyrmidine_PPase_CS"/>
</dbReference>
<dbReference type="InterPro" id="IPR000053">
    <property type="entry name" value="Thymidine/pyrmidine_PPase"/>
</dbReference>
<dbReference type="InterPro" id="IPR013465">
    <property type="entry name" value="Thymidine_Pase"/>
</dbReference>
<dbReference type="NCBIfam" id="NF004490">
    <property type="entry name" value="PRK05820.1"/>
    <property type="match status" value="1"/>
</dbReference>
<dbReference type="NCBIfam" id="TIGR02643">
    <property type="entry name" value="T_phosphoryl"/>
    <property type="match status" value="1"/>
</dbReference>
<dbReference type="NCBIfam" id="TIGR02644">
    <property type="entry name" value="Y_phosphoryl"/>
    <property type="match status" value="1"/>
</dbReference>
<dbReference type="PANTHER" id="PTHR10515">
    <property type="entry name" value="THYMIDINE PHOSPHORYLASE"/>
    <property type="match status" value="1"/>
</dbReference>
<dbReference type="PANTHER" id="PTHR10515:SF0">
    <property type="entry name" value="THYMIDINE PHOSPHORYLASE"/>
    <property type="match status" value="1"/>
</dbReference>
<dbReference type="Pfam" id="PF02885">
    <property type="entry name" value="Glycos_trans_3N"/>
    <property type="match status" value="1"/>
</dbReference>
<dbReference type="Pfam" id="PF00591">
    <property type="entry name" value="Glycos_transf_3"/>
    <property type="match status" value="1"/>
</dbReference>
<dbReference type="Pfam" id="PF07831">
    <property type="entry name" value="PYNP_C"/>
    <property type="match status" value="1"/>
</dbReference>
<dbReference type="PIRSF" id="PIRSF000478">
    <property type="entry name" value="TP_PyNP"/>
    <property type="match status" value="1"/>
</dbReference>
<dbReference type="SMART" id="SM00941">
    <property type="entry name" value="PYNP_C"/>
    <property type="match status" value="1"/>
</dbReference>
<dbReference type="SUPFAM" id="SSF52418">
    <property type="entry name" value="Nucleoside phosphorylase/phosphoribosyltransferase catalytic domain"/>
    <property type="match status" value="1"/>
</dbReference>
<dbReference type="SUPFAM" id="SSF47648">
    <property type="entry name" value="Nucleoside phosphorylase/phosphoribosyltransferase N-terminal domain"/>
    <property type="match status" value="1"/>
</dbReference>
<dbReference type="SUPFAM" id="SSF54680">
    <property type="entry name" value="Pyrimidine nucleoside phosphorylase C-terminal domain"/>
    <property type="match status" value="1"/>
</dbReference>
<dbReference type="PROSITE" id="PS00647">
    <property type="entry name" value="THYMID_PHOSPHORYLASE"/>
    <property type="match status" value="1"/>
</dbReference>
<sequence>MFLAQEIIRKKRDGHALSDEEIRFFINGIRDNTISEGQIAALAMTIFFHDMTMPERVSLTMAMRDSGTVLDWKSLNLNGPIVDKHSTGGVGDVTSLMLGPMVAACGGYVPMISGRGLGHTGGTLDKLEAIPGFDIFPDDNRFREIIQDVGVAIIGQTSSLAPADKRFYATRDITATVDSIPLITGSILAKKLAEGLDALVMDVKVGSGAFMPTYELSEALAEAIVGVANGAGVRTTALLTDMNQVLASSAGNAVEVREAVQFLTGEYRNPRLFDVTMALCVEMLISGQLAKDDAEARTKLQAVLDNGKAAEVFGRMVAAQKGPSDFVENYDKYLPTAMLSKAVYADTEGFISAMDTRALGMAVVSMGGGRRQASDTIDYSVGFTDMARLGDSIDGQRPLAVIHAKDEASWQEAAKAVKAAIILDDKAPVSTPSVYRRITE</sequence>
<evidence type="ECO:0000255" key="1">
    <source>
        <dbReference type="HAMAP-Rule" id="MF_01628"/>
    </source>
</evidence>
<evidence type="ECO:0000305" key="2"/>
<comment type="function">
    <text evidence="1">The enzymes which catalyze the reversible phosphorolysis of pyrimidine nucleosides are involved in the degradation of these compounds and in their utilization as carbon and energy sources, or in the rescue of pyrimidine bases for nucleotide synthesis.</text>
</comment>
<comment type="catalytic activity">
    <reaction evidence="1">
        <text>thymidine + phosphate = 2-deoxy-alpha-D-ribose 1-phosphate + thymine</text>
        <dbReference type="Rhea" id="RHEA:16037"/>
        <dbReference type="ChEBI" id="CHEBI:17748"/>
        <dbReference type="ChEBI" id="CHEBI:17821"/>
        <dbReference type="ChEBI" id="CHEBI:43474"/>
        <dbReference type="ChEBI" id="CHEBI:57259"/>
        <dbReference type="EC" id="2.4.2.4"/>
    </reaction>
</comment>
<comment type="pathway">
    <text evidence="1">Pyrimidine metabolism; dTMP biosynthesis via salvage pathway; dTMP from thymine: step 1/2.</text>
</comment>
<comment type="subunit">
    <text evidence="1">Homodimer.</text>
</comment>
<comment type="similarity">
    <text evidence="1">Belongs to the thymidine/pyrimidine-nucleoside phosphorylase family.</text>
</comment>
<comment type="sequence caution" evidence="2">
    <conflict type="erroneous initiation">
        <sequence resource="EMBL-CDS" id="AAX68322"/>
    </conflict>
</comment>
<accession>Q57G40</accession>
<proteinExistence type="inferred from homology"/>
<reference key="1">
    <citation type="journal article" date="2005" name="Nucleic Acids Res.">
        <title>The genome sequence of Salmonella enterica serovar Choleraesuis, a highly invasive and resistant zoonotic pathogen.</title>
        <authorList>
            <person name="Chiu C.-H."/>
            <person name="Tang P."/>
            <person name="Chu C."/>
            <person name="Hu S."/>
            <person name="Bao Q."/>
            <person name="Yu J."/>
            <person name="Chou Y.-Y."/>
            <person name="Wang H.-S."/>
            <person name="Lee Y.-S."/>
        </authorList>
    </citation>
    <scope>NUCLEOTIDE SEQUENCE [LARGE SCALE GENOMIC DNA]</scope>
    <source>
        <strain>SC-B67</strain>
    </source>
</reference>
<keyword id="KW-0328">Glycosyltransferase</keyword>
<keyword id="KW-0808">Transferase</keyword>
<name>TYPH_SALCH</name>
<organism>
    <name type="scientific">Salmonella choleraesuis (strain SC-B67)</name>
    <dbReference type="NCBI Taxonomy" id="321314"/>
    <lineage>
        <taxon>Bacteria</taxon>
        <taxon>Pseudomonadati</taxon>
        <taxon>Pseudomonadota</taxon>
        <taxon>Gammaproteobacteria</taxon>
        <taxon>Enterobacterales</taxon>
        <taxon>Enterobacteriaceae</taxon>
        <taxon>Salmonella</taxon>
    </lineage>
</organism>
<gene>
    <name evidence="1" type="primary">deoA</name>
    <name type="ordered locus">SCH_4416</name>
</gene>